<keyword id="KW-0472">Membrane</keyword>
<keyword id="KW-0479">Metal-binding</keyword>
<keyword id="KW-0553">Oncogene</keyword>
<keyword id="KW-1185">Reference proteome</keyword>
<keyword id="KW-0812">Transmembrane</keyword>
<keyword id="KW-1133">Transmembrane helix</keyword>
<keyword id="KW-0862">Zinc</keyword>
<keyword id="KW-0863">Zinc-finger</keyword>
<reference key="1">
    <citation type="journal article" date="1989" name="J. Virol.">
        <title>Deletion mutants of herpesvirus saimiri define an open reading frame necessary for transformation.</title>
        <authorList>
            <person name="Murthy S.C.S."/>
            <person name="Trimble J.J."/>
            <person name="Desrosiers R.C."/>
        </authorList>
    </citation>
    <scope>NUCLEOTIDE SEQUENCE [GENOMIC DNA]</scope>
</reference>
<reference key="2">
    <citation type="journal article" date="1992" name="J. Virol.">
        <title>Primary structure of the herpesvirus saimiri genome.</title>
        <authorList>
            <person name="Albrecht J.-C."/>
            <person name="Nicholas J."/>
            <person name="Biller D."/>
            <person name="Cameron K.R."/>
            <person name="Biesinger B."/>
            <person name="Newman C."/>
            <person name="Wittmann S."/>
            <person name="Craxton M.A."/>
            <person name="Coleman H."/>
            <person name="Fleckenstein B."/>
            <person name="Honess R.W."/>
        </authorList>
    </citation>
    <scope>NUCLEOTIDE SEQUENCE [LARGE SCALE GENOMIC DNA]</scope>
</reference>
<name>TSTP_SHV21</name>
<proteinExistence type="predicted"/>
<sequence length="164" mass="17061">MARGLGEGDPQENDESNGDPPHNTDERSDGDDGPTPYLPVTLLNAGPFGPYNPYCLLGHPVQESGCPGRPTALSGAVGLPTPSGSRSSSHLSTPVGLSAVRVSGCGGAGSEEHVYAEVGSLHSEHEQEGDKCTDCSVTILLLLVIIVLLLIIIGLMLVIMFKKM</sequence>
<organism>
    <name type="scientific">Saimiriine herpesvirus 2 (strain 11)</name>
    <name type="common">SaHV-2</name>
    <name type="synonym">Herpesvirus saimiri</name>
    <dbReference type="NCBI Taxonomy" id="10383"/>
    <lineage>
        <taxon>Viruses</taxon>
        <taxon>Duplodnaviria</taxon>
        <taxon>Heunggongvirae</taxon>
        <taxon>Peploviricota</taxon>
        <taxon>Herviviricetes</taxon>
        <taxon>Herpesvirales</taxon>
        <taxon>Orthoherpesviridae</taxon>
        <taxon>Gammaherpesvirinae</taxon>
        <taxon>Rhadinovirus</taxon>
        <taxon>Rhadinovirus saimiriinegamma2</taxon>
        <taxon>Saimiriine herpesvirus 2</taxon>
    </lineage>
</organism>
<organismHost>
    <name type="scientific">Saimiri sciureus</name>
    <name type="common">Common squirrel monkey</name>
    <dbReference type="NCBI Taxonomy" id="9521"/>
</organismHost>
<dbReference type="EMBL" id="X64346">
    <property type="protein sequence ID" value="CAA45623.1"/>
    <property type="molecule type" value="Genomic_DNA"/>
</dbReference>
<dbReference type="EMBL" id="M28071">
    <property type="protein sequence ID" value="AAA58725.1"/>
    <property type="molecule type" value="Genomic_DNA"/>
</dbReference>
<dbReference type="SMR" id="P18347"/>
<dbReference type="ELM" id="P18347"/>
<dbReference type="KEGG" id="vg:1488260"/>
<dbReference type="Proteomes" id="UP000000587">
    <property type="component" value="Segment"/>
</dbReference>
<dbReference type="GO" id="GO:0016020">
    <property type="term" value="C:membrane"/>
    <property type="evidence" value="ECO:0007669"/>
    <property type="project" value="UniProtKB-SubCell"/>
</dbReference>
<dbReference type="GO" id="GO:0008270">
    <property type="term" value="F:zinc ion binding"/>
    <property type="evidence" value="ECO:0007669"/>
    <property type="project" value="UniProtKB-KW"/>
</dbReference>
<dbReference type="InterPro" id="IPR016318">
    <property type="entry name" value="Transforming_StpA/StpB"/>
</dbReference>
<dbReference type="PIRSF" id="PIRSF001786">
    <property type="entry name" value="Transform_StpA/StpB"/>
    <property type="match status" value="1"/>
</dbReference>
<feature type="chain" id="PRO_0000116191" description="Transforming protein STP">
    <location>
        <begin position="1"/>
        <end position="164"/>
    </location>
</feature>
<feature type="transmembrane region" description="Helical" evidence="1">
    <location>
        <begin position="136"/>
        <end position="161"/>
    </location>
</feature>
<feature type="zinc finger region">
    <location>
        <begin position="122"/>
        <end position="135"/>
    </location>
</feature>
<feature type="region of interest" description="Disordered" evidence="2">
    <location>
        <begin position="1"/>
        <end position="41"/>
    </location>
</feature>
<protein>
    <recommendedName>
        <fullName>Transforming protein STP</fullName>
    </recommendedName>
</protein>
<comment type="function">
    <text>Stp is required for transformation, but it is not required for replication of the virus. The T-lymphocyte is the target cell for transformation by herpesvirus saimiri.</text>
</comment>
<comment type="subcellular location">
    <subcellularLocation>
        <location evidence="3">Membrane</location>
        <topology evidence="3">Single-pass membrane protein</topology>
    </subcellularLocation>
</comment>
<evidence type="ECO:0000255" key="1"/>
<evidence type="ECO:0000256" key="2">
    <source>
        <dbReference type="SAM" id="MobiDB-lite"/>
    </source>
</evidence>
<evidence type="ECO:0000305" key="3"/>
<gene>
    <name type="primary">1</name>
    <name type="synonym">STP</name>
</gene>
<accession>P18347</accession>